<reference key="1">
    <citation type="submission" date="2007-03" db="EMBL/GenBank/DDBJ databases">
        <title>Complete sequence of chromosome 1 of Burkholderia vietnamiensis G4.</title>
        <authorList>
            <consortium name="US DOE Joint Genome Institute"/>
            <person name="Copeland A."/>
            <person name="Lucas S."/>
            <person name="Lapidus A."/>
            <person name="Barry K."/>
            <person name="Detter J.C."/>
            <person name="Glavina del Rio T."/>
            <person name="Hammon N."/>
            <person name="Israni S."/>
            <person name="Dalin E."/>
            <person name="Tice H."/>
            <person name="Pitluck S."/>
            <person name="Chain P."/>
            <person name="Malfatti S."/>
            <person name="Shin M."/>
            <person name="Vergez L."/>
            <person name="Schmutz J."/>
            <person name="Larimer F."/>
            <person name="Land M."/>
            <person name="Hauser L."/>
            <person name="Kyrpides N."/>
            <person name="Tiedje J."/>
            <person name="Richardson P."/>
        </authorList>
    </citation>
    <scope>NUCLEOTIDE SEQUENCE [LARGE SCALE GENOMIC DNA]</scope>
    <source>
        <strain>G4 / LMG 22486</strain>
    </source>
</reference>
<sequence>MSKTHFGFESVEETEKAKKVAGVFHSVASNYDLMNDLMSAGMHRAWKAFTIAQANVRPGFKVLDIAAGTGDLTRAFAKAAGPTGEVWHTDINESMLRVGRDRLLDKGVVTPSLLCDAEKLPFPNNYFDVVTVAFGLRNMTHKDAALAEMRRVAKPGGRVMVLEFSKVWEPLKKAYDLYSFKVLPWLGDRFAKDADSYRYLAESIRMHPDQDTLKTMMEQAGLDAVKYYNLSGGVVALHVGSKY</sequence>
<dbReference type="EC" id="2.1.1.163" evidence="1"/>
<dbReference type="EC" id="2.1.1.201" evidence="1"/>
<dbReference type="EMBL" id="CP000614">
    <property type="protein sequence ID" value="ABO55829.1"/>
    <property type="molecule type" value="Genomic_DNA"/>
</dbReference>
<dbReference type="SMR" id="A4JHS6"/>
<dbReference type="KEGG" id="bvi:Bcep1808_2838"/>
<dbReference type="eggNOG" id="COG2226">
    <property type="taxonomic scope" value="Bacteria"/>
</dbReference>
<dbReference type="HOGENOM" id="CLU_037990_0_0_4"/>
<dbReference type="UniPathway" id="UPA00079">
    <property type="reaction ID" value="UER00169"/>
</dbReference>
<dbReference type="UniPathway" id="UPA00232"/>
<dbReference type="Proteomes" id="UP000002287">
    <property type="component" value="Chromosome 1"/>
</dbReference>
<dbReference type="GO" id="GO:0008425">
    <property type="term" value="F:2-methoxy-6-polyprenyl-1,4-benzoquinol methyltransferase activity"/>
    <property type="evidence" value="ECO:0007669"/>
    <property type="project" value="UniProtKB-UniRule"/>
</dbReference>
<dbReference type="GO" id="GO:0043770">
    <property type="term" value="F:demethylmenaquinone methyltransferase activity"/>
    <property type="evidence" value="ECO:0007669"/>
    <property type="project" value="UniProtKB-UniRule"/>
</dbReference>
<dbReference type="GO" id="GO:0009060">
    <property type="term" value="P:aerobic respiration"/>
    <property type="evidence" value="ECO:0007669"/>
    <property type="project" value="UniProtKB-UniRule"/>
</dbReference>
<dbReference type="GO" id="GO:0009234">
    <property type="term" value="P:menaquinone biosynthetic process"/>
    <property type="evidence" value="ECO:0007669"/>
    <property type="project" value="UniProtKB-UniRule"/>
</dbReference>
<dbReference type="GO" id="GO:0032259">
    <property type="term" value="P:methylation"/>
    <property type="evidence" value="ECO:0007669"/>
    <property type="project" value="UniProtKB-KW"/>
</dbReference>
<dbReference type="CDD" id="cd02440">
    <property type="entry name" value="AdoMet_MTases"/>
    <property type="match status" value="1"/>
</dbReference>
<dbReference type="Gene3D" id="3.40.50.150">
    <property type="entry name" value="Vaccinia Virus protein VP39"/>
    <property type="match status" value="1"/>
</dbReference>
<dbReference type="HAMAP" id="MF_01813">
    <property type="entry name" value="MenG_UbiE_methyltr"/>
    <property type="match status" value="1"/>
</dbReference>
<dbReference type="InterPro" id="IPR029063">
    <property type="entry name" value="SAM-dependent_MTases_sf"/>
</dbReference>
<dbReference type="InterPro" id="IPR004033">
    <property type="entry name" value="UbiE/COQ5_MeTrFase"/>
</dbReference>
<dbReference type="InterPro" id="IPR023576">
    <property type="entry name" value="UbiE/COQ5_MeTrFase_CS"/>
</dbReference>
<dbReference type="NCBIfam" id="TIGR01934">
    <property type="entry name" value="MenG_MenH_UbiE"/>
    <property type="match status" value="1"/>
</dbReference>
<dbReference type="NCBIfam" id="NF001240">
    <property type="entry name" value="PRK00216.1-1"/>
    <property type="match status" value="1"/>
</dbReference>
<dbReference type="PANTHER" id="PTHR43591:SF24">
    <property type="entry name" value="2-METHOXY-6-POLYPRENYL-1,4-BENZOQUINOL METHYLASE, MITOCHONDRIAL"/>
    <property type="match status" value="1"/>
</dbReference>
<dbReference type="PANTHER" id="PTHR43591">
    <property type="entry name" value="METHYLTRANSFERASE"/>
    <property type="match status" value="1"/>
</dbReference>
<dbReference type="Pfam" id="PF01209">
    <property type="entry name" value="Ubie_methyltran"/>
    <property type="match status" value="1"/>
</dbReference>
<dbReference type="SUPFAM" id="SSF53335">
    <property type="entry name" value="S-adenosyl-L-methionine-dependent methyltransferases"/>
    <property type="match status" value="1"/>
</dbReference>
<dbReference type="PROSITE" id="PS51608">
    <property type="entry name" value="SAM_MT_UBIE"/>
    <property type="match status" value="1"/>
</dbReference>
<dbReference type="PROSITE" id="PS01183">
    <property type="entry name" value="UBIE_1"/>
    <property type="match status" value="1"/>
</dbReference>
<accession>A4JHS6</accession>
<organism>
    <name type="scientific">Burkholderia vietnamiensis (strain G4 / LMG 22486)</name>
    <name type="common">Burkholderia cepacia (strain R1808)</name>
    <dbReference type="NCBI Taxonomy" id="269482"/>
    <lineage>
        <taxon>Bacteria</taxon>
        <taxon>Pseudomonadati</taxon>
        <taxon>Pseudomonadota</taxon>
        <taxon>Betaproteobacteria</taxon>
        <taxon>Burkholderiales</taxon>
        <taxon>Burkholderiaceae</taxon>
        <taxon>Burkholderia</taxon>
        <taxon>Burkholderia cepacia complex</taxon>
    </lineage>
</organism>
<evidence type="ECO:0000255" key="1">
    <source>
        <dbReference type="HAMAP-Rule" id="MF_01813"/>
    </source>
</evidence>
<name>UBIE_BURVG</name>
<gene>
    <name evidence="1" type="primary">ubiE</name>
    <name type="ordered locus">Bcep1808_2838</name>
</gene>
<comment type="function">
    <text evidence="1">Methyltransferase required for the conversion of demethylmenaquinol (DMKH2) to menaquinol (MKH2) and the conversion of 2-polyprenyl-6-methoxy-1,4-benzoquinol (DDMQH2) to 2-polyprenyl-3-methyl-6-methoxy-1,4-benzoquinol (DMQH2).</text>
</comment>
<comment type="catalytic activity">
    <reaction evidence="1">
        <text>a 2-demethylmenaquinol + S-adenosyl-L-methionine = a menaquinol + S-adenosyl-L-homocysteine + H(+)</text>
        <dbReference type="Rhea" id="RHEA:42640"/>
        <dbReference type="Rhea" id="RHEA-COMP:9539"/>
        <dbReference type="Rhea" id="RHEA-COMP:9563"/>
        <dbReference type="ChEBI" id="CHEBI:15378"/>
        <dbReference type="ChEBI" id="CHEBI:18151"/>
        <dbReference type="ChEBI" id="CHEBI:55437"/>
        <dbReference type="ChEBI" id="CHEBI:57856"/>
        <dbReference type="ChEBI" id="CHEBI:59789"/>
        <dbReference type="EC" id="2.1.1.163"/>
    </reaction>
</comment>
<comment type="catalytic activity">
    <reaction evidence="1">
        <text>a 2-methoxy-6-(all-trans-polyprenyl)benzene-1,4-diol + S-adenosyl-L-methionine = a 5-methoxy-2-methyl-3-(all-trans-polyprenyl)benzene-1,4-diol + S-adenosyl-L-homocysteine + H(+)</text>
        <dbReference type="Rhea" id="RHEA:28286"/>
        <dbReference type="Rhea" id="RHEA-COMP:10858"/>
        <dbReference type="Rhea" id="RHEA-COMP:10859"/>
        <dbReference type="ChEBI" id="CHEBI:15378"/>
        <dbReference type="ChEBI" id="CHEBI:57856"/>
        <dbReference type="ChEBI" id="CHEBI:59789"/>
        <dbReference type="ChEBI" id="CHEBI:84166"/>
        <dbReference type="ChEBI" id="CHEBI:84167"/>
        <dbReference type="EC" id="2.1.1.201"/>
    </reaction>
</comment>
<comment type="pathway">
    <text evidence="1">Quinol/quinone metabolism; menaquinone biosynthesis; menaquinol from 1,4-dihydroxy-2-naphthoate: step 2/2.</text>
</comment>
<comment type="pathway">
    <text evidence="1">Cofactor biosynthesis; ubiquinone biosynthesis.</text>
</comment>
<comment type="similarity">
    <text evidence="1">Belongs to the class I-like SAM-binding methyltransferase superfamily. MenG/UbiE family.</text>
</comment>
<proteinExistence type="inferred from homology"/>
<protein>
    <recommendedName>
        <fullName evidence="1">Ubiquinone/menaquinone biosynthesis C-methyltransferase UbiE</fullName>
        <ecNumber evidence="1">2.1.1.163</ecNumber>
        <ecNumber evidence="1">2.1.1.201</ecNumber>
    </recommendedName>
    <alternativeName>
        <fullName evidence="1">2-methoxy-6-polyprenyl-1,4-benzoquinol methylase</fullName>
    </alternativeName>
    <alternativeName>
        <fullName evidence="1">Demethylmenaquinone methyltransferase</fullName>
    </alternativeName>
</protein>
<feature type="chain" id="PRO_1000056236" description="Ubiquinone/menaquinone biosynthesis C-methyltransferase UbiE">
    <location>
        <begin position="1"/>
        <end position="243"/>
    </location>
</feature>
<feature type="binding site" evidence="1">
    <location>
        <position position="69"/>
    </location>
    <ligand>
        <name>S-adenosyl-L-methionine</name>
        <dbReference type="ChEBI" id="CHEBI:59789"/>
    </ligand>
</feature>
<feature type="binding site" evidence="1">
    <location>
        <position position="90"/>
    </location>
    <ligand>
        <name>S-adenosyl-L-methionine</name>
        <dbReference type="ChEBI" id="CHEBI:59789"/>
    </ligand>
</feature>
<feature type="binding site" evidence="1">
    <location>
        <begin position="116"/>
        <end position="117"/>
    </location>
    <ligand>
        <name>S-adenosyl-L-methionine</name>
        <dbReference type="ChEBI" id="CHEBI:59789"/>
    </ligand>
</feature>
<keyword id="KW-0474">Menaquinone biosynthesis</keyword>
<keyword id="KW-0489">Methyltransferase</keyword>
<keyword id="KW-0949">S-adenosyl-L-methionine</keyword>
<keyword id="KW-0808">Transferase</keyword>
<keyword id="KW-0831">Ubiquinone biosynthesis</keyword>